<evidence type="ECO:0000255" key="1">
    <source>
        <dbReference type="HAMAP-Rule" id="MF_01919"/>
    </source>
</evidence>
<evidence type="ECO:0000269" key="2">
    <source>
    </source>
</evidence>
<evidence type="ECO:0000305" key="3"/>
<evidence type="ECO:0000305" key="4">
    <source>
    </source>
</evidence>
<dbReference type="EMBL" id="U18997">
    <property type="protein sequence ID" value="AAA58034.1"/>
    <property type="molecule type" value="Genomic_DNA"/>
</dbReference>
<dbReference type="EMBL" id="U00096">
    <property type="protein sequence ID" value="AAC76264.1"/>
    <property type="molecule type" value="Genomic_DNA"/>
</dbReference>
<dbReference type="EMBL" id="AP009048">
    <property type="protein sequence ID" value="BAE77275.1"/>
    <property type="molecule type" value="Genomic_DNA"/>
</dbReference>
<dbReference type="PIR" id="B65115">
    <property type="entry name" value="B65115"/>
</dbReference>
<dbReference type="RefSeq" id="NP_417699.1">
    <property type="nucleotide sequence ID" value="NC_000913.3"/>
</dbReference>
<dbReference type="RefSeq" id="WP_001192332.1">
    <property type="nucleotide sequence ID" value="NZ_SSZK01000034.1"/>
</dbReference>
<dbReference type="SMR" id="P64612"/>
<dbReference type="BioGRID" id="4261913">
    <property type="interactions" value="26"/>
</dbReference>
<dbReference type="DIP" id="DIP-48198N"/>
<dbReference type="FunCoup" id="P64612">
    <property type="interactions" value="585"/>
</dbReference>
<dbReference type="IntAct" id="P64612">
    <property type="interactions" value="1"/>
</dbReference>
<dbReference type="STRING" id="511145.b3232"/>
<dbReference type="jPOST" id="P64612"/>
<dbReference type="PaxDb" id="511145-b3232"/>
<dbReference type="EnsemblBacteria" id="AAC76264">
    <property type="protein sequence ID" value="AAC76264"/>
    <property type="gene ID" value="b3232"/>
</dbReference>
<dbReference type="GeneID" id="75173400"/>
<dbReference type="GeneID" id="947821"/>
<dbReference type="KEGG" id="ecj:JW3201"/>
<dbReference type="KEGG" id="eco:b3232"/>
<dbReference type="KEGG" id="ecoc:C3026_17585"/>
<dbReference type="PATRIC" id="fig|511145.12.peg.3329"/>
<dbReference type="EchoBASE" id="EB2670"/>
<dbReference type="eggNOG" id="COG1485">
    <property type="taxonomic scope" value="Bacteria"/>
</dbReference>
<dbReference type="HOGENOM" id="CLU_008681_0_4_6"/>
<dbReference type="InParanoid" id="P64612"/>
<dbReference type="OMA" id="ARRFINM"/>
<dbReference type="OrthoDB" id="9774491at2"/>
<dbReference type="PhylomeDB" id="P64612"/>
<dbReference type="BioCyc" id="EcoCyc:G7680-MONOMER"/>
<dbReference type="PRO" id="PR:P64612"/>
<dbReference type="Proteomes" id="UP000000625">
    <property type="component" value="Chromosome"/>
</dbReference>
<dbReference type="GO" id="GO:0032153">
    <property type="term" value="C:cell division site"/>
    <property type="evidence" value="ECO:0000314"/>
    <property type="project" value="EcoCyc"/>
</dbReference>
<dbReference type="GO" id="GO:0005737">
    <property type="term" value="C:cytoplasm"/>
    <property type="evidence" value="ECO:0000314"/>
    <property type="project" value="EcoCyc"/>
</dbReference>
<dbReference type="GO" id="GO:0005524">
    <property type="term" value="F:ATP binding"/>
    <property type="evidence" value="ECO:0007669"/>
    <property type="project" value="UniProtKB-UniRule"/>
</dbReference>
<dbReference type="GO" id="GO:0016887">
    <property type="term" value="F:ATP hydrolysis activity"/>
    <property type="evidence" value="ECO:0000314"/>
    <property type="project" value="EcoCyc"/>
</dbReference>
<dbReference type="GO" id="GO:0005543">
    <property type="term" value="F:phospholipid binding"/>
    <property type="evidence" value="ECO:0000314"/>
    <property type="project" value="EcoCyc"/>
</dbReference>
<dbReference type="GO" id="GO:0051301">
    <property type="term" value="P:cell division"/>
    <property type="evidence" value="ECO:0000315"/>
    <property type="project" value="EcoCyc"/>
</dbReference>
<dbReference type="FunFam" id="3.40.50.300:FF:001274">
    <property type="entry name" value="Cell division protein ZapE"/>
    <property type="match status" value="1"/>
</dbReference>
<dbReference type="Gene3D" id="3.40.50.300">
    <property type="entry name" value="P-loop containing nucleotide triphosphate hydrolases"/>
    <property type="match status" value="1"/>
</dbReference>
<dbReference type="HAMAP" id="MF_01919">
    <property type="entry name" value="ZapE"/>
    <property type="match status" value="1"/>
</dbReference>
<dbReference type="InterPro" id="IPR005654">
    <property type="entry name" value="ATPase_AFG1-like"/>
</dbReference>
<dbReference type="InterPro" id="IPR027417">
    <property type="entry name" value="P-loop_NTPase"/>
</dbReference>
<dbReference type="InterPro" id="IPR030870">
    <property type="entry name" value="ZapE"/>
</dbReference>
<dbReference type="NCBIfam" id="NF040713">
    <property type="entry name" value="ZapE"/>
    <property type="match status" value="1"/>
</dbReference>
<dbReference type="PANTHER" id="PTHR12169:SF6">
    <property type="entry name" value="AFG1-LIKE ATPASE"/>
    <property type="match status" value="1"/>
</dbReference>
<dbReference type="PANTHER" id="PTHR12169">
    <property type="entry name" value="ATPASE N2B"/>
    <property type="match status" value="1"/>
</dbReference>
<dbReference type="Pfam" id="PF03969">
    <property type="entry name" value="AFG1_ATPase"/>
    <property type="match status" value="1"/>
</dbReference>
<dbReference type="SUPFAM" id="SSF52540">
    <property type="entry name" value="P-loop containing nucleoside triphosphate hydrolases"/>
    <property type="match status" value="1"/>
</dbReference>
<gene>
    <name evidence="1" type="primary">zapE</name>
    <name type="synonym">yhcM</name>
    <name type="ordered locus">b3232</name>
    <name type="ordered locus">JW3201</name>
</gene>
<feature type="chain" id="PRO_0000169487" description="Cell division protein ZapE">
    <location>
        <begin position="1"/>
        <end position="375"/>
    </location>
</feature>
<feature type="binding site" evidence="3">
    <location>
        <begin position="78"/>
        <end position="85"/>
    </location>
    <ligand>
        <name>ATP</name>
        <dbReference type="ChEBI" id="CHEBI:30616"/>
    </ligand>
</feature>
<feature type="mutagenesis site" description="Abolishes ATPase activity." evidence="2">
    <original>K</original>
    <variation>A</variation>
    <location>
        <position position="84"/>
    </location>
</feature>
<accession>P64612</accession>
<accession>P46442</accession>
<accession>Q2M8Y1</accession>
<sequence>MQSVTPTSQYLKALNEGSHQPDDVQKEAVSRLEIIYQELINSTPPAPRTSGLMARVGKLWGKREDTKHTPVRGLYMWGGVGRGKTWLMDLFYQSLPGERKQRLHFHRFMLRVHEELTALQGQTDPLEIIADRFKAETDVLCFDEFFVSDITDAMLLGGLMKALFARGITLVATSNIPPDELYRNGLQRARFLPAIDAIKQHCDVMNVDAGVDYRLRTLTQAHLWLSPLHDETRAQMDKLWLALAGGKRENSPTLEINHRPLATMGVENQTLAVSFTTLCVDARSQHDYIALSRLFHTVMLFDVPVMTRLMESEARRFIALVDEFYERHVKLVVSAEVPLYEIYQGDRLKFEFQRCLSRLQEMQSEEYLKREHLAG</sequence>
<organism>
    <name type="scientific">Escherichia coli (strain K12)</name>
    <dbReference type="NCBI Taxonomy" id="83333"/>
    <lineage>
        <taxon>Bacteria</taxon>
        <taxon>Pseudomonadati</taxon>
        <taxon>Pseudomonadota</taxon>
        <taxon>Gammaproteobacteria</taxon>
        <taxon>Enterobacterales</taxon>
        <taxon>Enterobacteriaceae</taxon>
        <taxon>Escherichia</taxon>
    </lineage>
</organism>
<comment type="function">
    <text evidence="1 2">Reduces the stability of FtsZ polymers in the presence of ATP. Required for cell division under low-oxygen conditions. Hydrolyzes ATP but not GTP.</text>
</comment>
<comment type="subunit">
    <text evidence="1 2">Interacts with FtsZ.</text>
</comment>
<comment type="subcellular location">
    <subcellularLocation>
        <location evidence="1 2">Cytoplasm</location>
    </subcellularLocation>
    <text>Localizes to the constricting Z-ring during late stages of the cell division process.</text>
</comment>
<comment type="disruption phenotype">
    <text evidence="2">Mutants have no growth defect in aerobic conditions. However, inactivation leads to a stress-dependent elongated phenotype (in anaerobiosis or at temperatures over 37 degrees Celsius).</text>
</comment>
<comment type="miscellaneous">
    <text evidence="4">ZapE abundance has to be tightly regulated to allow cell division. Loss or overexpression of ZapE alters Z-ring stability and leads to bacterial filamentation (PubMed:24595368).</text>
</comment>
<comment type="similarity">
    <text evidence="1">Belongs to the AFG1 ATPase family. ZapE subfamily.</text>
</comment>
<protein>
    <recommendedName>
        <fullName evidence="1">Cell division protein ZapE</fullName>
    </recommendedName>
    <alternativeName>
        <fullName evidence="1">Z ring-associated protein ZapE</fullName>
    </alternativeName>
</protein>
<reference key="1">
    <citation type="journal article" date="1997" name="Science">
        <title>The complete genome sequence of Escherichia coli K-12.</title>
        <authorList>
            <person name="Blattner F.R."/>
            <person name="Plunkett G. III"/>
            <person name="Bloch C.A."/>
            <person name="Perna N.T."/>
            <person name="Burland V."/>
            <person name="Riley M."/>
            <person name="Collado-Vides J."/>
            <person name="Glasner J.D."/>
            <person name="Rode C.K."/>
            <person name="Mayhew G.F."/>
            <person name="Gregor J."/>
            <person name="Davis N.W."/>
            <person name="Kirkpatrick H.A."/>
            <person name="Goeden M.A."/>
            <person name="Rose D.J."/>
            <person name="Mau B."/>
            <person name="Shao Y."/>
        </authorList>
    </citation>
    <scope>NUCLEOTIDE SEQUENCE [LARGE SCALE GENOMIC DNA]</scope>
    <source>
        <strain>K12 / MG1655 / ATCC 47076</strain>
    </source>
</reference>
<reference key="2">
    <citation type="journal article" date="2006" name="Mol. Syst. Biol.">
        <title>Highly accurate genome sequences of Escherichia coli K-12 strains MG1655 and W3110.</title>
        <authorList>
            <person name="Hayashi K."/>
            <person name="Morooka N."/>
            <person name="Yamamoto Y."/>
            <person name="Fujita K."/>
            <person name="Isono K."/>
            <person name="Choi S."/>
            <person name="Ohtsubo E."/>
            <person name="Baba T."/>
            <person name="Wanner B.L."/>
            <person name="Mori H."/>
            <person name="Horiuchi T."/>
        </authorList>
    </citation>
    <scope>NUCLEOTIDE SEQUENCE [LARGE SCALE GENOMIC DNA]</scope>
    <source>
        <strain>K12 / W3110 / ATCC 27325 / DSM 5911</strain>
    </source>
</reference>
<reference key="3">
    <citation type="journal article" date="2014" name="MBio">
        <title>ZapE is a novel cell division protein interacting with FtsZ and modulating the Z-ring dynamics.</title>
        <authorList>
            <person name="Marteyn B.S."/>
            <person name="Karimova G."/>
            <person name="Fenton A.K."/>
            <person name="Gazi A.D."/>
            <person name="West N."/>
            <person name="Touqui L."/>
            <person name="Prevost M.C."/>
            <person name="Betton J.M."/>
            <person name="Poyraz O."/>
            <person name="Ladant D."/>
            <person name="Gerdes K."/>
            <person name="Sansonetti P.J."/>
            <person name="Tang C.M."/>
        </authorList>
    </citation>
    <scope>FUNCTION</scope>
    <scope>INTERACTION WITH FTSZ</scope>
    <scope>SUBCELLULAR LOCATION</scope>
    <scope>DISRUPTION PHENOTYPE</scope>
    <scope>GENE NAME</scope>
    <scope>MUTAGENESIS OF LYS-84</scope>
    <source>
        <strain>K12 / MG1655 / ATCC 47076</strain>
    </source>
</reference>
<keyword id="KW-0067">ATP-binding</keyword>
<keyword id="KW-0131">Cell cycle</keyword>
<keyword id="KW-0132">Cell division</keyword>
<keyword id="KW-0963">Cytoplasm</keyword>
<keyword id="KW-0378">Hydrolase</keyword>
<keyword id="KW-0547">Nucleotide-binding</keyword>
<keyword id="KW-1185">Reference proteome</keyword>
<proteinExistence type="evidence at protein level"/>
<name>ZAPE_ECOLI</name>